<sequence>MKISFHGQSCIKIITGNTTILVDPFISGNEKCDLKAEEQMPDFIVLSHGHDDHVGDTVEIAKNSGATVICNADLASFLAVEDGLENIAAMHIGGKRQFEFGQVKLTQAFHGSQTVRNGRIINLGFPTGVVFTIENKNIYFAGDTGLFSDMKLIGELNPLDVAFLPIGDNFTMGPEDAAIAARFLQTKLVIPMHYNTFPLIEQDPHKFVASLDEGISGKVLEIGESIEI</sequence>
<organism>
    <name type="scientific">Listeria welshimeri serovar 6b (strain ATCC 35897 / DSM 20650 / CCUG 15529 / CIP 8149 / NCTC 11857 / SLCC 5334 / V8)</name>
    <dbReference type="NCBI Taxonomy" id="386043"/>
    <lineage>
        <taxon>Bacteria</taxon>
        <taxon>Bacillati</taxon>
        <taxon>Bacillota</taxon>
        <taxon>Bacilli</taxon>
        <taxon>Bacillales</taxon>
        <taxon>Listeriaceae</taxon>
        <taxon>Listeria</taxon>
    </lineage>
</organism>
<evidence type="ECO:0000255" key="1">
    <source>
        <dbReference type="HAMAP-Rule" id="MF_00457"/>
    </source>
</evidence>
<comment type="similarity">
    <text evidence="1">Belongs to the UPF0173 family.</text>
</comment>
<feature type="chain" id="PRO_1000013505" description="UPF0173 metal-dependent hydrolase lwe1590">
    <location>
        <begin position="1"/>
        <end position="228"/>
    </location>
</feature>
<dbReference type="EMBL" id="AM263198">
    <property type="protein sequence ID" value="CAK21008.1"/>
    <property type="molecule type" value="Genomic_DNA"/>
</dbReference>
<dbReference type="RefSeq" id="WP_011702375.1">
    <property type="nucleotide sequence ID" value="NC_008555.1"/>
</dbReference>
<dbReference type="SMR" id="A0AJ26"/>
<dbReference type="STRING" id="386043.lwe1590"/>
<dbReference type="GeneID" id="61189467"/>
<dbReference type="KEGG" id="lwe:lwe1590"/>
<dbReference type="eggNOG" id="COG2220">
    <property type="taxonomic scope" value="Bacteria"/>
</dbReference>
<dbReference type="HOGENOM" id="CLU_070010_4_1_9"/>
<dbReference type="OrthoDB" id="9789133at2"/>
<dbReference type="Proteomes" id="UP000000779">
    <property type="component" value="Chromosome"/>
</dbReference>
<dbReference type="GO" id="GO:0016787">
    <property type="term" value="F:hydrolase activity"/>
    <property type="evidence" value="ECO:0007669"/>
    <property type="project" value="UniProtKB-UniRule"/>
</dbReference>
<dbReference type="Gene3D" id="3.60.15.10">
    <property type="entry name" value="Ribonuclease Z/Hydroxyacylglutathione hydrolase-like"/>
    <property type="match status" value="1"/>
</dbReference>
<dbReference type="HAMAP" id="MF_00457">
    <property type="entry name" value="UPF0173"/>
    <property type="match status" value="1"/>
</dbReference>
<dbReference type="InterPro" id="IPR001279">
    <property type="entry name" value="Metallo-B-lactamas"/>
</dbReference>
<dbReference type="InterPro" id="IPR036866">
    <property type="entry name" value="RibonucZ/Hydroxyglut_hydro"/>
</dbReference>
<dbReference type="InterPro" id="IPR022877">
    <property type="entry name" value="UPF0173"/>
</dbReference>
<dbReference type="InterPro" id="IPR050114">
    <property type="entry name" value="UPF0173_UPF0282_UlaG_hydrolase"/>
</dbReference>
<dbReference type="NCBIfam" id="NF001911">
    <property type="entry name" value="PRK00685.1"/>
    <property type="match status" value="1"/>
</dbReference>
<dbReference type="PANTHER" id="PTHR43546:SF3">
    <property type="entry name" value="UPF0173 METAL-DEPENDENT HYDROLASE MJ1163"/>
    <property type="match status" value="1"/>
</dbReference>
<dbReference type="PANTHER" id="PTHR43546">
    <property type="entry name" value="UPF0173 METAL-DEPENDENT HYDROLASE MJ1163-RELATED"/>
    <property type="match status" value="1"/>
</dbReference>
<dbReference type="Pfam" id="PF12706">
    <property type="entry name" value="Lactamase_B_2"/>
    <property type="match status" value="1"/>
</dbReference>
<dbReference type="SMART" id="SM00849">
    <property type="entry name" value="Lactamase_B"/>
    <property type="match status" value="1"/>
</dbReference>
<dbReference type="SUPFAM" id="SSF56281">
    <property type="entry name" value="Metallo-hydrolase/oxidoreductase"/>
    <property type="match status" value="1"/>
</dbReference>
<proteinExistence type="inferred from homology"/>
<gene>
    <name type="ordered locus">lwe1590</name>
</gene>
<accession>A0AJ26</accession>
<protein>
    <recommendedName>
        <fullName evidence="1">UPF0173 metal-dependent hydrolase lwe1590</fullName>
    </recommendedName>
</protein>
<reference key="1">
    <citation type="journal article" date="2006" name="J. Bacteriol.">
        <title>Whole-genome sequence of Listeria welshimeri reveals common steps in genome reduction with Listeria innocua as compared to Listeria monocytogenes.</title>
        <authorList>
            <person name="Hain T."/>
            <person name="Steinweg C."/>
            <person name="Kuenne C.T."/>
            <person name="Billion A."/>
            <person name="Ghai R."/>
            <person name="Chatterjee S.S."/>
            <person name="Domann E."/>
            <person name="Kaerst U."/>
            <person name="Goesmann A."/>
            <person name="Bekel T."/>
            <person name="Bartels D."/>
            <person name="Kaiser O."/>
            <person name="Meyer F."/>
            <person name="Puehler A."/>
            <person name="Weisshaar B."/>
            <person name="Wehland J."/>
            <person name="Liang C."/>
            <person name="Dandekar T."/>
            <person name="Lampidis R."/>
            <person name="Kreft J."/>
            <person name="Goebel W."/>
            <person name="Chakraborty T."/>
        </authorList>
    </citation>
    <scope>NUCLEOTIDE SEQUENCE [LARGE SCALE GENOMIC DNA]</scope>
    <source>
        <strain>ATCC 35897 / DSM 20650 / CCUG 15529 / CIP 8149 / NCTC 11857 / SLCC 5334 / V8</strain>
    </source>
</reference>
<name>Y1590_LISW6</name>
<keyword id="KW-0378">Hydrolase</keyword>